<keyword id="KW-1185">Reference proteome</keyword>
<keyword id="KW-0687">Ribonucleoprotein</keyword>
<keyword id="KW-0689">Ribosomal protein</keyword>
<keyword id="KW-0694">RNA-binding</keyword>
<keyword id="KW-0699">rRNA-binding</keyword>
<reference key="1">
    <citation type="journal article" date="2003" name="DNA Res.">
        <title>Complete genome structure of Gloeobacter violaceus PCC 7421, a cyanobacterium that lacks thylakoids.</title>
        <authorList>
            <person name="Nakamura Y."/>
            <person name="Kaneko T."/>
            <person name="Sato S."/>
            <person name="Mimuro M."/>
            <person name="Miyashita H."/>
            <person name="Tsuchiya T."/>
            <person name="Sasamoto S."/>
            <person name="Watanabe A."/>
            <person name="Kawashima K."/>
            <person name="Kishida Y."/>
            <person name="Kiyokawa C."/>
            <person name="Kohara M."/>
            <person name="Matsumoto M."/>
            <person name="Matsuno A."/>
            <person name="Nakazaki N."/>
            <person name="Shimpo S."/>
            <person name="Takeuchi C."/>
            <person name="Yamada M."/>
            <person name="Tabata S."/>
        </authorList>
    </citation>
    <scope>NUCLEOTIDE SEQUENCE [LARGE SCALE GENOMIC DNA]</scope>
    <source>
        <strain>ATCC 29082 / PCC 7421</strain>
    </source>
</reference>
<evidence type="ECO:0000255" key="1">
    <source>
        <dbReference type="HAMAP-Rule" id="MF_01343"/>
    </source>
</evidence>
<evidence type="ECO:0000305" key="2"/>
<accession>Q7NE54</accession>
<protein>
    <recommendedName>
        <fullName evidence="1">Small ribosomal subunit protein uS15</fullName>
    </recommendedName>
    <alternativeName>
        <fullName evidence="2">30S ribosomal protein S15</fullName>
    </alternativeName>
</protein>
<feature type="chain" id="PRO_0000115444" description="Small ribosomal subunit protein uS15">
    <location>
        <begin position="1"/>
        <end position="89"/>
    </location>
</feature>
<gene>
    <name evidence="1" type="primary">rpsO</name>
    <name evidence="1" type="synonym">rps15</name>
    <name type="ordered locus">gsl4026</name>
</gene>
<comment type="function">
    <text evidence="1">One of the primary rRNA binding proteins, it binds directly to 16S rRNA where it helps nucleate assembly of the platform of the 30S subunit by binding and bridging several RNA helices of the 16S rRNA.</text>
</comment>
<comment type="function">
    <text evidence="1">Forms an intersubunit bridge (bridge B4) with the 23S rRNA of the 50S subunit in the ribosome.</text>
</comment>
<comment type="subunit">
    <text evidence="1">Part of the 30S ribosomal subunit. Forms a bridge to the 50S subunit in the 70S ribosome, contacting the 23S rRNA.</text>
</comment>
<comment type="similarity">
    <text evidence="1">Belongs to the universal ribosomal protein uS15 family.</text>
</comment>
<proteinExistence type="inferred from homology"/>
<name>RS15_GLOVI</name>
<dbReference type="EMBL" id="BA000045">
    <property type="protein sequence ID" value="BAC91967.1"/>
    <property type="molecule type" value="Genomic_DNA"/>
</dbReference>
<dbReference type="RefSeq" id="NP_926972.1">
    <property type="nucleotide sequence ID" value="NC_005125.1"/>
</dbReference>
<dbReference type="RefSeq" id="WP_011144014.1">
    <property type="nucleotide sequence ID" value="NC_005125.1"/>
</dbReference>
<dbReference type="SMR" id="Q7NE54"/>
<dbReference type="FunCoup" id="Q7NE54">
    <property type="interactions" value="175"/>
</dbReference>
<dbReference type="STRING" id="251221.gene:10761544"/>
<dbReference type="EnsemblBacteria" id="BAC91967">
    <property type="protein sequence ID" value="BAC91967"/>
    <property type="gene ID" value="BAC91967"/>
</dbReference>
<dbReference type="KEGG" id="gvi:gsl4026"/>
<dbReference type="PATRIC" id="fig|251221.4.peg.4057"/>
<dbReference type="eggNOG" id="COG0184">
    <property type="taxonomic scope" value="Bacteria"/>
</dbReference>
<dbReference type="HOGENOM" id="CLU_148518_0_0_3"/>
<dbReference type="InParanoid" id="Q7NE54"/>
<dbReference type="OrthoDB" id="9799262at2"/>
<dbReference type="PhylomeDB" id="Q7NE54"/>
<dbReference type="Proteomes" id="UP000000557">
    <property type="component" value="Chromosome"/>
</dbReference>
<dbReference type="GO" id="GO:0022627">
    <property type="term" value="C:cytosolic small ribosomal subunit"/>
    <property type="evidence" value="ECO:0000318"/>
    <property type="project" value="GO_Central"/>
</dbReference>
<dbReference type="GO" id="GO:0019843">
    <property type="term" value="F:rRNA binding"/>
    <property type="evidence" value="ECO:0007669"/>
    <property type="project" value="UniProtKB-UniRule"/>
</dbReference>
<dbReference type="GO" id="GO:0003735">
    <property type="term" value="F:structural constituent of ribosome"/>
    <property type="evidence" value="ECO:0007669"/>
    <property type="project" value="InterPro"/>
</dbReference>
<dbReference type="GO" id="GO:0006412">
    <property type="term" value="P:translation"/>
    <property type="evidence" value="ECO:0007669"/>
    <property type="project" value="UniProtKB-UniRule"/>
</dbReference>
<dbReference type="CDD" id="cd00353">
    <property type="entry name" value="Ribosomal_S15p_S13e"/>
    <property type="match status" value="1"/>
</dbReference>
<dbReference type="FunFam" id="1.10.287.10:FF:000002">
    <property type="entry name" value="30S ribosomal protein S15"/>
    <property type="match status" value="1"/>
</dbReference>
<dbReference type="Gene3D" id="6.10.250.3130">
    <property type="match status" value="1"/>
</dbReference>
<dbReference type="Gene3D" id="1.10.287.10">
    <property type="entry name" value="S15/NS1, RNA-binding"/>
    <property type="match status" value="1"/>
</dbReference>
<dbReference type="HAMAP" id="MF_01343_B">
    <property type="entry name" value="Ribosomal_uS15_B"/>
    <property type="match status" value="1"/>
</dbReference>
<dbReference type="InterPro" id="IPR000589">
    <property type="entry name" value="Ribosomal_uS15"/>
</dbReference>
<dbReference type="InterPro" id="IPR005290">
    <property type="entry name" value="Ribosomal_uS15_bac-type"/>
</dbReference>
<dbReference type="InterPro" id="IPR009068">
    <property type="entry name" value="uS15_NS1_RNA-bd_sf"/>
</dbReference>
<dbReference type="NCBIfam" id="TIGR00952">
    <property type="entry name" value="S15_bact"/>
    <property type="match status" value="1"/>
</dbReference>
<dbReference type="PANTHER" id="PTHR23321">
    <property type="entry name" value="RIBOSOMAL PROTEIN S15, BACTERIAL AND ORGANELLAR"/>
    <property type="match status" value="1"/>
</dbReference>
<dbReference type="PANTHER" id="PTHR23321:SF26">
    <property type="entry name" value="SMALL RIBOSOMAL SUBUNIT PROTEIN US15M"/>
    <property type="match status" value="1"/>
</dbReference>
<dbReference type="Pfam" id="PF00312">
    <property type="entry name" value="Ribosomal_S15"/>
    <property type="match status" value="1"/>
</dbReference>
<dbReference type="SMART" id="SM01387">
    <property type="entry name" value="Ribosomal_S15"/>
    <property type="match status" value="1"/>
</dbReference>
<dbReference type="SUPFAM" id="SSF47060">
    <property type="entry name" value="S15/NS1 RNA-binding domain"/>
    <property type="match status" value="1"/>
</dbReference>
<dbReference type="PROSITE" id="PS00362">
    <property type="entry name" value="RIBOSOMAL_S15"/>
    <property type="match status" value="1"/>
</dbReference>
<sequence>MPLTQDRKQELIGTYQVHETDTGSPEVQVAMLSDRINQLTEHLRSHPKDFSSRRGLLKLIGRRKQLLAYLAANEADRYRALVDRLGLRR</sequence>
<organism>
    <name type="scientific">Gloeobacter violaceus (strain ATCC 29082 / PCC 7421)</name>
    <dbReference type="NCBI Taxonomy" id="251221"/>
    <lineage>
        <taxon>Bacteria</taxon>
        <taxon>Bacillati</taxon>
        <taxon>Cyanobacteriota</taxon>
        <taxon>Cyanophyceae</taxon>
        <taxon>Gloeobacterales</taxon>
        <taxon>Gloeobacteraceae</taxon>
        <taxon>Gloeobacter</taxon>
    </lineage>
</organism>